<organism>
    <name type="scientific">Pyrobaculum arsenaticum (strain DSM 13514 / JCM 11321 / PZ6)</name>
    <dbReference type="NCBI Taxonomy" id="340102"/>
    <lineage>
        <taxon>Archaea</taxon>
        <taxon>Thermoproteota</taxon>
        <taxon>Thermoprotei</taxon>
        <taxon>Thermoproteales</taxon>
        <taxon>Thermoproteaceae</taxon>
        <taxon>Pyrobaculum</taxon>
    </lineage>
</organism>
<comment type="function">
    <text evidence="1">Prenyltransferase that catalyzes the transfer of the geranylgeranyl moiety of geranylgeranyl diphosphate (GGPP) to the C3 hydroxyl of sn-glycerol-1-phosphate (G1P). This reaction is the first ether-bond-formation step in the biosynthesis of archaeal membrane lipids.</text>
</comment>
<comment type="catalytic activity">
    <reaction evidence="1">
        <text>sn-glycerol 1-phosphate + (2E,6E,10E)-geranylgeranyl diphosphate = sn-3-O-(geranylgeranyl)glycerol 1-phosphate + diphosphate</text>
        <dbReference type="Rhea" id="RHEA:23404"/>
        <dbReference type="ChEBI" id="CHEBI:33019"/>
        <dbReference type="ChEBI" id="CHEBI:57677"/>
        <dbReference type="ChEBI" id="CHEBI:57685"/>
        <dbReference type="ChEBI" id="CHEBI:58756"/>
        <dbReference type="EC" id="2.5.1.41"/>
    </reaction>
</comment>
<comment type="cofactor">
    <cofactor evidence="1">
        <name>Mg(2+)</name>
        <dbReference type="ChEBI" id="CHEBI:18420"/>
    </cofactor>
</comment>
<comment type="pathway">
    <text evidence="1">Membrane lipid metabolism; glycerophospholipid metabolism.</text>
</comment>
<comment type="subcellular location">
    <subcellularLocation>
        <location evidence="1">Cytoplasm</location>
    </subcellularLocation>
</comment>
<comment type="similarity">
    <text evidence="1">Belongs to the GGGP/HepGP synthase family. Group II subfamily.</text>
</comment>
<protein>
    <recommendedName>
        <fullName evidence="1">Geranylgeranylglyceryl phosphate synthase</fullName>
        <shortName evidence="1">GGGP synthase</shortName>
        <shortName evidence="1">GGGPS</shortName>
        <ecNumber evidence="1">2.5.1.41</ecNumber>
    </recommendedName>
    <alternativeName>
        <fullName evidence="1">(S)-3-O-geranylgeranylglyceryl phosphate synthase</fullName>
    </alternativeName>
    <alternativeName>
        <fullName evidence="1">Phosphoglycerol geranylgeranyltransferase</fullName>
    </alternativeName>
</protein>
<keyword id="KW-0963">Cytoplasm</keyword>
<keyword id="KW-0444">Lipid biosynthesis</keyword>
<keyword id="KW-0443">Lipid metabolism</keyword>
<keyword id="KW-0460">Magnesium</keyword>
<keyword id="KW-0479">Metal-binding</keyword>
<keyword id="KW-0594">Phospholipid biosynthesis</keyword>
<keyword id="KW-1208">Phospholipid metabolism</keyword>
<keyword id="KW-0808">Transferase</keyword>
<evidence type="ECO:0000255" key="1">
    <source>
        <dbReference type="HAMAP-Rule" id="MF_00112"/>
    </source>
</evidence>
<feature type="chain" id="PRO_0000304186" description="Geranylgeranylglyceryl phosphate synthase">
    <location>
        <begin position="1"/>
        <end position="239"/>
    </location>
</feature>
<feature type="binding site" evidence="1">
    <location>
        <position position="18"/>
    </location>
    <ligand>
        <name>Mg(2+)</name>
        <dbReference type="ChEBI" id="CHEBI:18420"/>
    </ligand>
</feature>
<feature type="binding site" evidence="1">
    <location>
        <position position="45"/>
    </location>
    <ligand>
        <name>Mg(2+)</name>
        <dbReference type="ChEBI" id="CHEBI:18420"/>
    </ligand>
</feature>
<feature type="binding site" evidence="1">
    <location>
        <begin position="166"/>
        <end position="172"/>
    </location>
    <ligand>
        <name>sn-glycerol 1-phosphate</name>
        <dbReference type="ChEBI" id="CHEBI:57685"/>
    </ligand>
</feature>
<feature type="binding site" evidence="1">
    <location>
        <begin position="197"/>
        <end position="198"/>
    </location>
    <ligand>
        <name>sn-glycerol 1-phosphate</name>
        <dbReference type="ChEBI" id="CHEBI:57685"/>
    </ligand>
</feature>
<feature type="binding site" evidence="1">
    <location>
        <begin position="219"/>
        <end position="220"/>
    </location>
    <ligand>
        <name>sn-glycerol 1-phosphate</name>
        <dbReference type="ChEBI" id="CHEBI:57685"/>
    </ligand>
</feature>
<sequence>MNLYEYLSQGIKHFTLIDPDKSVDYLRIARYALEAGTDGILVGGSLGITASQMEKVVKDIKSVANVPVVLFPGSLSQLTDAADGVLFLSVLNSLDPYFIIGAQVHGAVLIAKHYPRLEVISTAYVIVGDGGAAGFVSMSKPIPYTRPDIATAYALAAGYIGFKALYLEAGSGAPQPVPPDMVRAVRKAFPRVLIVGGGIRSSEVARSIAREGPNVIVTGTLAEESPEKLGEIVRAIKQR</sequence>
<proteinExistence type="inferred from homology"/>
<gene>
    <name type="ordered locus">Pars_1793</name>
</gene>
<name>GGGPS_PYRAR</name>
<dbReference type="EC" id="2.5.1.41" evidence="1"/>
<dbReference type="EMBL" id="CP000660">
    <property type="protein sequence ID" value="ABP51344.1"/>
    <property type="molecule type" value="Genomic_DNA"/>
</dbReference>
<dbReference type="RefSeq" id="WP_011901249.1">
    <property type="nucleotide sequence ID" value="NC_009376.1"/>
</dbReference>
<dbReference type="SMR" id="A4WLS7"/>
<dbReference type="STRING" id="340102.Pars_1793"/>
<dbReference type="GeneID" id="5055709"/>
<dbReference type="KEGG" id="pas:Pars_1793"/>
<dbReference type="HOGENOM" id="CLU_068610_0_0_2"/>
<dbReference type="OrthoDB" id="7409at2157"/>
<dbReference type="PhylomeDB" id="A4WLS7"/>
<dbReference type="UniPathway" id="UPA00940"/>
<dbReference type="Proteomes" id="UP000001567">
    <property type="component" value="Chromosome"/>
</dbReference>
<dbReference type="GO" id="GO:0005737">
    <property type="term" value="C:cytoplasm"/>
    <property type="evidence" value="ECO:0007669"/>
    <property type="project" value="UniProtKB-SubCell"/>
</dbReference>
<dbReference type="GO" id="GO:0000287">
    <property type="term" value="F:magnesium ion binding"/>
    <property type="evidence" value="ECO:0007669"/>
    <property type="project" value="UniProtKB-UniRule"/>
</dbReference>
<dbReference type="GO" id="GO:0047294">
    <property type="term" value="F:phosphoglycerol geranylgeranyltransferase activity"/>
    <property type="evidence" value="ECO:0007669"/>
    <property type="project" value="UniProtKB-UniRule"/>
</dbReference>
<dbReference type="GO" id="GO:0046474">
    <property type="term" value="P:glycerophospholipid biosynthetic process"/>
    <property type="evidence" value="ECO:0007669"/>
    <property type="project" value="UniProtKB-UniRule"/>
</dbReference>
<dbReference type="CDD" id="cd02812">
    <property type="entry name" value="PcrB_like"/>
    <property type="match status" value="1"/>
</dbReference>
<dbReference type="FunFam" id="3.20.20.390:FF:000001">
    <property type="entry name" value="Heptaprenylglyceryl phosphate synthase"/>
    <property type="match status" value="1"/>
</dbReference>
<dbReference type="Gene3D" id="3.20.20.390">
    <property type="entry name" value="FMN-linked oxidoreductases"/>
    <property type="match status" value="1"/>
</dbReference>
<dbReference type="HAMAP" id="MF_00112">
    <property type="entry name" value="GGGP_HepGP_synthase"/>
    <property type="match status" value="1"/>
</dbReference>
<dbReference type="InterPro" id="IPR039074">
    <property type="entry name" value="GGGP/HepGP_synthase_I"/>
</dbReference>
<dbReference type="InterPro" id="IPR038597">
    <property type="entry name" value="GGGP/HepGP_synthase_sf"/>
</dbReference>
<dbReference type="InterPro" id="IPR008205">
    <property type="entry name" value="GGGP_HepGP_synthase"/>
</dbReference>
<dbReference type="InterPro" id="IPR010946">
    <property type="entry name" value="GGGP_synth"/>
</dbReference>
<dbReference type="NCBIfam" id="TIGR01769">
    <property type="entry name" value="GGGP"/>
    <property type="match status" value="1"/>
</dbReference>
<dbReference type="NCBIfam" id="TIGR01768">
    <property type="entry name" value="GGGP-family"/>
    <property type="match status" value="1"/>
</dbReference>
<dbReference type="NCBIfam" id="NF003198">
    <property type="entry name" value="PRK04169.1-2"/>
    <property type="match status" value="1"/>
</dbReference>
<dbReference type="PANTHER" id="PTHR40029">
    <property type="match status" value="1"/>
</dbReference>
<dbReference type="PANTHER" id="PTHR40029:SF2">
    <property type="entry name" value="HEPTAPRENYLGLYCERYL PHOSPHATE SYNTHASE"/>
    <property type="match status" value="1"/>
</dbReference>
<dbReference type="Pfam" id="PF01884">
    <property type="entry name" value="PcrB"/>
    <property type="match status" value="1"/>
</dbReference>
<dbReference type="SUPFAM" id="SSF51395">
    <property type="entry name" value="FMN-linked oxidoreductases"/>
    <property type="match status" value="1"/>
</dbReference>
<reference key="1">
    <citation type="submission" date="2007-04" db="EMBL/GenBank/DDBJ databases">
        <title>Complete sequence of Pyrobaculum arsenaticum DSM 13514.</title>
        <authorList>
            <consortium name="US DOE Joint Genome Institute"/>
            <person name="Copeland A."/>
            <person name="Lucas S."/>
            <person name="Lapidus A."/>
            <person name="Barry K."/>
            <person name="Glavina del Rio T."/>
            <person name="Dalin E."/>
            <person name="Tice H."/>
            <person name="Pitluck S."/>
            <person name="Chain P."/>
            <person name="Malfatti S."/>
            <person name="Shin M."/>
            <person name="Vergez L."/>
            <person name="Schmutz J."/>
            <person name="Larimer F."/>
            <person name="Land M."/>
            <person name="Hauser L."/>
            <person name="Kyrpides N."/>
            <person name="Mikhailova N."/>
            <person name="Cozen A.E."/>
            <person name="Fitz-Gibbon S.T."/>
            <person name="House C.H."/>
            <person name="Saltikov C."/>
            <person name="Lowe T.M."/>
            <person name="Richardson P."/>
        </authorList>
    </citation>
    <scope>NUCLEOTIDE SEQUENCE [LARGE SCALE GENOMIC DNA]</scope>
    <source>
        <strain>ATCC 700994 / DSM 13514 / JCM 11321 / PZ6</strain>
    </source>
</reference>
<accession>A4WLS7</accession>